<accession>Q8TX44</accession>
<evidence type="ECO:0000255" key="1">
    <source>
        <dbReference type="HAMAP-Rule" id="MF_00435"/>
    </source>
</evidence>
<evidence type="ECO:0000255" key="2">
    <source>
        <dbReference type="PROSITE-ProRule" id="PRU01197"/>
    </source>
</evidence>
<evidence type="ECO:0000255" key="3">
    <source>
        <dbReference type="PROSITE-ProRule" id="PRU01198"/>
    </source>
</evidence>
<comment type="function">
    <text evidence="1">Involved in the biosynthesis of branched-chain amino acids (BCAA). Catalyzes an alkyl-migration followed by a ketol-acid reduction of (S)-2-acetolactate (S2AL) to yield (R)-2,3-dihydroxy-isovalerate. In the isomerase reaction, S2AL is rearranged via a Mg-dependent methyl migration to produce 3-hydroxy-3-methyl-2-ketobutyrate (HMKB). In the reductase reaction, this 2-ketoacid undergoes a metal-dependent reduction by NADPH to yield (R)-2,3-dihydroxy-isovalerate.</text>
</comment>
<comment type="catalytic activity">
    <reaction evidence="1">
        <text>(2R)-2,3-dihydroxy-3-methylbutanoate + NADP(+) = (2S)-2-acetolactate + NADPH + H(+)</text>
        <dbReference type="Rhea" id="RHEA:22068"/>
        <dbReference type="ChEBI" id="CHEBI:15378"/>
        <dbReference type="ChEBI" id="CHEBI:49072"/>
        <dbReference type="ChEBI" id="CHEBI:57783"/>
        <dbReference type="ChEBI" id="CHEBI:58349"/>
        <dbReference type="ChEBI" id="CHEBI:58476"/>
        <dbReference type="EC" id="1.1.1.86"/>
    </reaction>
</comment>
<comment type="catalytic activity">
    <reaction evidence="1">
        <text>(2R,3R)-2,3-dihydroxy-3-methylpentanoate + NADP(+) = (S)-2-ethyl-2-hydroxy-3-oxobutanoate + NADPH + H(+)</text>
        <dbReference type="Rhea" id="RHEA:13493"/>
        <dbReference type="ChEBI" id="CHEBI:15378"/>
        <dbReference type="ChEBI" id="CHEBI:49256"/>
        <dbReference type="ChEBI" id="CHEBI:49258"/>
        <dbReference type="ChEBI" id="CHEBI:57783"/>
        <dbReference type="ChEBI" id="CHEBI:58349"/>
        <dbReference type="EC" id="1.1.1.86"/>
    </reaction>
</comment>
<comment type="cofactor">
    <cofactor evidence="1">
        <name>Mg(2+)</name>
        <dbReference type="ChEBI" id="CHEBI:18420"/>
    </cofactor>
    <text evidence="1">Binds 2 magnesium ions per subunit.</text>
</comment>
<comment type="pathway">
    <text evidence="1">Amino-acid biosynthesis; L-isoleucine biosynthesis; L-isoleucine from 2-oxobutanoate: step 2/4.</text>
</comment>
<comment type="pathway">
    <text evidence="1">Amino-acid biosynthesis; L-valine biosynthesis; L-valine from pyruvate: step 2/4.</text>
</comment>
<comment type="similarity">
    <text evidence="1">Belongs to the ketol-acid reductoisomerase family.</text>
</comment>
<reference key="1">
    <citation type="journal article" date="2002" name="Proc. Natl. Acad. Sci. U.S.A.">
        <title>The complete genome of hyperthermophile Methanopyrus kandleri AV19 and monophyly of archaeal methanogens.</title>
        <authorList>
            <person name="Slesarev A.I."/>
            <person name="Mezhevaya K.V."/>
            <person name="Makarova K.S."/>
            <person name="Polushin N.N."/>
            <person name="Shcherbinina O.V."/>
            <person name="Shakhova V.V."/>
            <person name="Belova G.I."/>
            <person name="Aravind L."/>
            <person name="Natale D.A."/>
            <person name="Rogozin I.B."/>
            <person name="Tatusov R.L."/>
            <person name="Wolf Y.I."/>
            <person name="Stetter K.O."/>
            <person name="Malykh A.G."/>
            <person name="Koonin E.V."/>
            <person name="Kozyavkin S.A."/>
        </authorList>
    </citation>
    <scope>NUCLEOTIDE SEQUENCE [LARGE SCALE GENOMIC DNA]</scope>
    <source>
        <strain>AV19 / DSM 6324 / JCM 9639 / NBRC 100938</strain>
    </source>
</reference>
<organism>
    <name type="scientific">Methanopyrus kandleri (strain AV19 / DSM 6324 / JCM 9639 / NBRC 100938)</name>
    <dbReference type="NCBI Taxonomy" id="190192"/>
    <lineage>
        <taxon>Archaea</taxon>
        <taxon>Methanobacteriati</taxon>
        <taxon>Methanobacteriota</taxon>
        <taxon>Methanomada group</taxon>
        <taxon>Methanopyri</taxon>
        <taxon>Methanopyrales</taxon>
        <taxon>Methanopyraceae</taxon>
        <taxon>Methanopyrus</taxon>
    </lineage>
</organism>
<feature type="chain" id="PRO_0000151392" description="Ketol-acid reductoisomerase (NADP(+))">
    <location>
        <begin position="1"/>
        <end position="326"/>
    </location>
</feature>
<feature type="domain" description="KARI N-terminal Rossmann" evidence="2">
    <location>
        <begin position="2"/>
        <end position="182"/>
    </location>
</feature>
<feature type="domain" description="KARI C-terminal knotted" evidence="3">
    <location>
        <begin position="183"/>
        <end position="325"/>
    </location>
</feature>
<feature type="active site" evidence="1">
    <location>
        <position position="108"/>
    </location>
</feature>
<feature type="binding site" evidence="1">
    <location>
        <begin position="25"/>
        <end position="28"/>
    </location>
    <ligand>
        <name>NADP(+)</name>
        <dbReference type="ChEBI" id="CHEBI:58349"/>
    </ligand>
</feature>
<feature type="binding site" evidence="1">
    <location>
        <position position="48"/>
    </location>
    <ligand>
        <name>NADP(+)</name>
        <dbReference type="ChEBI" id="CHEBI:58349"/>
    </ligand>
</feature>
<feature type="binding site" evidence="1">
    <location>
        <position position="53"/>
    </location>
    <ligand>
        <name>NADP(+)</name>
        <dbReference type="ChEBI" id="CHEBI:58349"/>
    </ligand>
</feature>
<feature type="binding site" evidence="1">
    <location>
        <begin position="83"/>
        <end position="86"/>
    </location>
    <ligand>
        <name>NADP(+)</name>
        <dbReference type="ChEBI" id="CHEBI:58349"/>
    </ligand>
</feature>
<feature type="binding site" evidence="1">
    <location>
        <position position="134"/>
    </location>
    <ligand>
        <name>NADP(+)</name>
        <dbReference type="ChEBI" id="CHEBI:58349"/>
    </ligand>
</feature>
<feature type="binding site" evidence="1">
    <location>
        <position position="191"/>
    </location>
    <ligand>
        <name>Mg(2+)</name>
        <dbReference type="ChEBI" id="CHEBI:18420"/>
        <label>1</label>
    </ligand>
</feature>
<feature type="binding site" evidence="1">
    <location>
        <position position="191"/>
    </location>
    <ligand>
        <name>Mg(2+)</name>
        <dbReference type="ChEBI" id="CHEBI:18420"/>
        <label>2</label>
    </ligand>
</feature>
<feature type="binding site" evidence="1">
    <location>
        <position position="195"/>
    </location>
    <ligand>
        <name>Mg(2+)</name>
        <dbReference type="ChEBI" id="CHEBI:18420"/>
        <label>1</label>
    </ligand>
</feature>
<feature type="binding site" evidence="1">
    <location>
        <position position="227"/>
    </location>
    <ligand>
        <name>Mg(2+)</name>
        <dbReference type="ChEBI" id="CHEBI:18420"/>
        <label>2</label>
    </ligand>
</feature>
<feature type="binding site" evidence="1">
    <location>
        <position position="231"/>
    </location>
    <ligand>
        <name>Mg(2+)</name>
        <dbReference type="ChEBI" id="CHEBI:18420"/>
        <label>2</label>
    </ligand>
</feature>
<feature type="binding site" evidence="1">
    <location>
        <position position="252"/>
    </location>
    <ligand>
        <name>substrate</name>
    </ligand>
</feature>
<sequence length="326" mass="36460">MAKIYGDEDASLEPLEDKTVAVIGYGSQGEAQAKNLRDSGIDVIIGVREGGPSWERAKKDGFEVLPIPEAAEAGDVVHILIPDEVQPQVYREHIHDNLEKGNALGFSHAYNIHYGLIEPPEYVDVILVAPKGPGHMVRKLYTEGFGTPALVAVHQDYTGEAMDLALAMAKAMGFTRAGVIKTTFREEVETDLFGEQVDLVGGVLYMILYAFETLVEAGYQPEVAYFETLHELKLIVDLIYEKGLSGMLDNVSNTAEYGGLTRGKRIINKEEMRKVLEEIRSGEFAREWTLENESGRIVMKRLREEIENHEIEKVGERLRKMMGFED</sequence>
<name>ILVC_METKA</name>
<gene>
    <name evidence="1" type="primary">ilvC</name>
    <name type="ordered locus">MK0832</name>
</gene>
<keyword id="KW-0028">Amino-acid biosynthesis</keyword>
<keyword id="KW-0100">Branched-chain amino acid biosynthesis</keyword>
<keyword id="KW-0460">Magnesium</keyword>
<keyword id="KW-0479">Metal-binding</keyword>
<keyword id="KW-0521">NADP</keyword>
<keyword id="KW-0560">Oxidoreductase</keyword>
<keyword id="KW-1185">Reference proteome</keyword>
<protein>
    <recommendedName>
        <fullName evidence="1">Ketol-acid reductoisomerase (NADP(+))</fullName>
        <shortName evidence="1">KARI</shortName>
        <ecNumber evidence="1">1.1.1.86</ecNumber>
    </recommendedName>
    <alternativeName>
        <fullName evidence="1">Acetohydroxy-acid isomeroreductase</fullName>
        <shortName evidence="1">AHIR</shortName>
    </alternativeName>
    <alternativeName>
        <fullName evidence="1">Alpha-keto-beta-hydroxylacyl reductoisomerase</fullName>
    </alternativeName>
    <alternativeName>
        <fullName evidence="1">Ketol-acid reductoisomerase type 1</fullName>
    </alternativeName>
    <alternativeName>
        <fullName evidence="1">Ketol-acid reductoisomerase type I</fullName>
    </alternativeName>
</protein>
<proteinExistence type="inferred from homology"/>
<dbReference type="EC" id="1.1.1.86" evidence="1"/>
<dbReference type="EMBL" id="AE009439">
    <property type="protein sequence ID" value="AAM02045.1"/>
    <property type="molecule type" value="Genomic_DNA"/>
</dbReference>
<dbReference type="RefSeq" id="WP_011019200.1">
    <property type="nucleotide sequence ID" value="NC_003551.1"/>
</dbReference>
<dbReference type="SMR" id="Q8TX44"/>
<dbReference type="FunCoup" id="Q8TX44">
    <property type="interactions" value="133"/>
</dbReference>
<dbReference type="STRING" id="190192.MK0832"/>
<dbReference type="PaxDb" id="190192-MK0832"/>
<dbReference type="EnsemblBacteria" id="AAM02045">
    <property type="protein sequence ID" value="AAM02045"/>
    <property type="gene ID" value="MK0832"/>
</dbReference>
<dbReference type="GeneID" id="1476933"/>
<dbReference type="KEGG" id="mka:MK0832"/>
<dbReference type="PATRIC" id="fig|190192.8.peg.875"/>
<dbReference type="HOGENOM" id="CLU_033821_0_1_2"/>
<dbReference type="InParanoid" id="Q8TX44"/>
<dbReference type="OrthoDB" id="6064at2157"/>
<dbReference type="UniPathway" id="UPA00047">
    <property type="reaction ID" value="UER00056"/>
</dbReference>
<dbReference type="UniPathway" id="UPA00049">
    <property type="reaction ID" value="UER00060"/>
</dbReference>
<dbReference type="Proteomes" id="UP000001826">
    <property type="component" value="Chromosome"/>
</dbReference>
<dbReference type="GO" id="GO:0004455">
    <property type="term" value="F:ketol-acid reductoisomerase activity"/>
    <property type="evidence" value="ECO:0007669"/>
    <property type="project" value="UniProtKB-UniRule"/>
</dbReference>
<dbReference type="GO" id="GO:0000287">
    <property type="term" value="F:magnesium ion binding"/>
    <property type="evidence" value="ECO:0007669"/>
    <property type="project" value="UniProtKB-UniRule"/>
</dbReference>
<dbReference type="GO" id="GO:0050661">
    <property type="term" value="F:NADP binding"/>
    <property type="evidence" value="ECO:0007669"/>
    <property type="project" value="InterPro"/>
</dbReference>
<dbReference type="GO" id="GO:0009097">
    <property type="term" value="P:isoleucine biosynthetic process"/>
    <property type="evidence" value="ECO:0007669"/>
    <property type="project" value="UniProtKB-UniRule"/>
</dbReference>
<dbReference type="GO" id="GO:0009099">
    <property type="term" value="P:L-valine biosynthetic process"/>
    <property type="evidence" value="ECO:0007669"/>
    <property type="project" value="UniProtKB-UniRule"/>
</dbReference>
<dbReference type="FunFam" id="3.40.50.720:FF:000023">
    <property type="entry name" value="Ketol-acid reductoisomerase (NADP(+))"/>
    <property type="match status" value="1"/>
</dbReference>
<dbReference type="Gene3D" id="6.10.240.10">
    <property type="match status" value="1"/>
</dbReference>
<dbReference type="Gene3D" id="3.40.50.720">
    <property type="entry name" value="NAD(P)-binding Rossmann-like Domain"/>
    <property type="match status" value="1"/>
</dbReference>
<dbReference type="HAMAP" id="MF_00435">
    <property type="entry name" value="IlvC"/>
    <property type="match status" value="1"/>
</dbReference>
<dbReference type="InterPro" id="IPR008927">
    <property type="entry name" value="6-PGluconate_DH-like_C_sf"/>
</dbReference>
<dbReference type="InterPro" id="IPR013023">
    <property type="entry name" value="KARI"/>
</dbReference>
<dbReference type="InterPro" id="IPR000506">
    <property type="entry name" value="KARI_C"/>
</dbReference>
<dbReference type="InterPro" id="IPR013116">
    <property type="entry name" value="KARI_N"/>
</dbReference>
<dbReference type="InterPro" id="IPR014359">
    <property type="entry name" value="KARI_prok"/>
</dbReference>
<dbReference type="InterPro" id="IPR036291">
    <property type="entry name" value="NAD(P)-bd_dom_sf"/>
</dbReference>
<dbReference type="NCBIfam" id="TIGR00465">
    <property type="entry name" value="ilvC"/>
    <property type="match status" value="1"/>
</dbReference>
<dbReference type="NCBIfam" id="NF004017">
    <property type="entry name" value="PRK05479.1"/>
    <property type="match status" value="1"/>
</dbReference>
<dbReference type="NCBIfam" id="NF009940">
    <property type="entry name" value="PRK13403.1"/>
    <property type="match status" value="1"/>
</dbReference>
<dbReference type="PANTHER" id="PTHR21371">
    <property type="entry name" value="KETOL-ACID REDUCTOISOMERASE, MITOCHONDRIAL"/>
    <property type="match status" value="1"/>
</dbReference>
<dbReference type="PANTHER" id="PTHR21371:SF1">
    <property type="entry name" value="KETOL-ACID REDUCTOISOMERASE, MITOCHONDRIAL"/>
    <property type="match status" value="1"/>
</dbReference>
<dbReference type="Pfam" id="PF01450">
    <property type="entry name" value="KARI_C"/>
    <property type="match status" value="1"/>
</dbReference>
<dbReference type="Pfam" id="PF07991">
    <property type="entry name" value="KARI_N"/>
    <property type="match status" value="1"/>
</dbReference>
<dbReference type="PIRSF" id="PIRSF000116">
    <property type="entry name" value="IlvC_gammaproteo"/>
    <property type="match status" value="1"/>
</dbReference>
<dbReference type="SUPFAM" id="SSF48179">
    <property type="entry name" value="6-phosphogluconate dehydrogenase C-terminal domain-like"/>
    <property type="match status" value="1"/>
</dbReference>
<dbReference type="SUPFAM" id="SSF51735">
    <property type="entry name" value="NAD(P)-binding Rossmann-fold domains"/>
    <property type="match status" value="1"/>
</dbReference>
<dbReference type="PROSITE" id="PS51851">
    <property type="entry name" value="KARI_C"/>
    <property type="match status" value="1"/>
</dbReference>
<dbReference type="PROSITE" id="PS51850">
    <property type="entry name" value="KARI_N"/>
    <property type="match status" value="1"/>
</dbReference>